<sequence length="92" mass="10829">MNFFAMQKSSLLPDTPYTVQSLQIVDYFIRIVYTVRYAPNILLHYQLFCITKKFIFAWQVPPPLLSYQSCSTDKQYKYSCRSTRKHSSSLTA</sequence>
<name>AC152_NPVAC</name>
<gene>
    <name type="primary">AC152</name>
    <name type="ORF">ORF152</name>
</gene>
<accession>P41708</accession>
<organism>
    <name type="scientific">Autographa californica nuclear polyhedrosis virus</name>
    <name type="common">AcMNPV</name>
    <dbReference type="NCBI Taxonomy" id="46015"/>
    <lineage>
        <taxon>Viruses</taxon>
        <taxon>Viruses incertae sedis</taxon>
        <taxon>Naldaviricetes</taxon>
        <taxon>Lefavirales</taxon>
        <taxon>Baculoviridae</taxon>
        <taxon>Alphabaculovirus</taxon>
        <taxon>Alphabaculovirus aucalifornicae</taxon>
    </lineage>
</organism>
<protein>
    <recommendedName>
        <fullName>Protein AC152</fullName>
    </recommendedName>
</protein>
<keyword id="KW-1185">Reference proteome</keyword>
<keyword id="KW-0804">Transcription</keyword>
<keyword id="KW-0805">Transcription regulation</keyword>
<organismHost>
    <name type="scientific">Lepidoptera</name>
    <name type="common">butterflies and moths</name>
    <dbReference type="NCBI Taxonomy" id="7088"/>
</organismHost>
<feature type="chain" id="PRO_0000133075" description="Protein AC152">
    <location>
        <begin position="1"/>
        <end position="92"/>
    </location>
</feature>
<dbReference type="EMBL" id="L22858">
    <property type="protein sequence ID" value="AAA66782.1"/>
    <property type="molecule type" value="Genomic_DNA"/>
</dbReference>
<dbReference type="PIR" id="B72869">
    <property type="entry name" value="B72869"/>
</dbReference>
<dbReference type="KEGG" id="vg:1403985"/>
<dbReference type="OrthoDB" id="27698at10239"/>
<dbReference type="Proteomes" id="UP000008292">
    <property type="component" value="Segment"/>
</dbReference>
<comment type="function">
    <text evidence="1">Acts as a transactivator of AC102 and HE65 genes. Therefore, participates in the global recruitment of G-actin to the host nucleus.</text>
</comment>
<proteinExistence type="predicted"/>
<evidence type="ECO:0000269" key="1">
    <source>
    </source>
</evidence>
<reference key="1">
    <citation type="journal article" date="1994" name="Virology">
        <title>The complete DNA sequence of Autographa californica nuclear polyhedrosis virus.</title>
        <authorList>
            <person name="Ayres M.D."/>
            <person name="Howard S.C."/>
            <person name="Kuzio J."/>
            <person name="Lopez-Ferber M."/>
            <person name="Possee R.D."/>
        </authorList>
    </citation>
    <scope>NUCLEOTIDE SEQUENCE [LARGE SCALE GENOMIC DNA]</scope>
    <source>
        <strain>C6</strain>
    </source>
</reference>
<reference key="2">
    <citation type="journal article" date="2002" name="J. Virol.">
        <title>Identification of six Autographa californica multicapsid nucleopolyhedrovirus early genes that mediate nuclear localization of G-actin.</title>
        <authorList>
            <person name="Ohkawa T."/>
            <person name="Rowe A.R."/>
            <person name="Volkman L.E."/>
        </authorList>
    </citation>
    <scope>FUNCTION</scope>
</reference>